<comment type="function">
    <text evidence="1">Reversibly transfers an adenylyl group from ATP to 4'-phosphopantetheine, yielding dephospho-CoA (dPCoA) and pyrophosphate.</text>
</comment>
<comment type="catalytic activity">
    <reaction evidence="1">
        <text>(R)-4'-phosphopantetheine + ATP + H(+) = 3'-dephospho-CoA + diphosphate</text>
        <dbReference type="Rhea" id="RHEA:19801"/>
        <dbReference type="ChEBI" id="CHEBI:15378"/>
        <dbReference type="ChEBI" id="CHEBI:30616"/>
        <dbReference type="ChEBI" id="CHEBI:33019"/>
        <dbReference type="ChEBI" id="CHEBI:57328"/>
        <dbReference type="ChEBI" id="CHEBI:61723"/>
        <dbReference type="EC" id="2.7.7.3"/>
    </reaction>
</comment>
<comment type="cofactor">
    <cofactor evidence="1">
        <name>Mg(2+)</name>
        <dbReference type="ChEBI" id="CHEBI:18420"/>
    </cofactor>
</comment>
<comment type="pathway">
    <text evidence="1">Cofactor biosynthesis; coenzyme A biosynthesis; CoA from (R)-pantothenate: step 4/5.</text>
</comment>
<comment type="subunit">
    <text evidence="1">Homohexamer.</text>
</comment>
<comment type="subcellular location">
    <subcellularLocation>
        <location evidence="1">Cytoplasm</location>
    </subcellularLocation>
</comment>
<comment type="similarity">
    <text evidence="1">Belongs to the bacterial CoaD family.</text>
</comment>
<reference key="1">
    <citation type="journal article" date="2001" name="Science">
        <title>Comparative genomics of Listeria species.</title>
        <authorList>
            <person name="Glaser P."/>
            <person name="Frangeul L."/>
            <person name="Buchrieser C."/>
            <person name="Rusniok C."/>
            <person name="Amend A."/>
            <person name="Baquero F."/>
            <person name="Berche P."/>
            <person name="Bloecker H."/>
            <person name="Brandt P."/>
            <person name="Chakraborty T."/>
            <person name="Charbit A."/>
            <person name="Chetouani F."/>
            <person name="Couve E."/>
            <person name="de Daruvar A."/>
            <person name="Dehoux P."/>
            <person name="Domann E."/>
            <person name="Dominguez-Bernal G."/>
            <person name="Duchaud E."/>
            <person name="Durant L."/>
            <person name="Dussurget O."/>
            <person name="Entian K.-D."/>
            <person name="Fsihi H."/>
            <person name="Garcia-del Portillo F."/>
            <person name="Garrido P."/>
            <person name="Gautier L."/>
            <person name="Goebel W."/>
            <person name="Gomez-Lopez N."/>
            <person name="Hain T."/>
            <person name="Hauf J."/>
            <person name="Jackson D."/>
            <person name="Jones L.-M."/>
            <person name="Kaerst U."/>
            <person name="Kreft J."/>
            <person name="Kuhn M."/>
            <person name="Kunst F."/>
            <person name="Kurapkat G."/>
            <person name="Madueno E."/>
            <person name="Maitournam A."/>
            <person name="Mata Vicente J."/>
            <person name="Ng E."/>
            <person name="Nedjari H."/>
            <person name="Nordsiek G."/>
            <person name="Novella S."/>
            <person name="de Pablos B."/>
            <person name="Perez-Diaz J.-C."/>
            <person name="Purcell R."/>
            <person name="Remmel B."/>
            <person name="Rose M."/>
            <person name="Schlueter T."/>
            <person name="Simoes N."/>
            <person name="Tierrez A."/>
            <person name="Vazquez-Boland J.-A."/>
            <person name="Voss H."/>
            <person name="Wehland J."/>
            <person name="Cossart P."/>
        </authorList>
    </citation>
    <scope>NUCLEOTIDE SEQUENCE [LARGE SCALE GENOMIC DNA]</scope>
    <source>
        <strain>ATCC BAA-680 / CLIP 11262</strain>
    </source>
</reference>
<keyword id="KW-0067">ATP-binding</keyword>
<keyword id="KW-0173">Coenzyme A biosynthesis</keyword>
<keyword id="KW-0963">Cytoplasm</keyword>
<keyword id="KW-0460">Magnesium</keyword>
<keyword id="KW-0547">Nucleotide-binding</keyword>
<keyword id="KW-0548">Nucleotidyltransferase</keyword>
<keyword id="KW-0808">Transferase</keyword>
<organism>
    <name type="scientific">Listeria innocua serovar 6a (strain ATCC BAA-680 / CLIP 11262)</name>
    <dbReference type="NCBI Taxonomy" id="272626"/>
    <lineage>
        <taxon>Bacteria</taxon>
        <taxon>Bacillati</taxon>
        <taxon>Bacillota</taxon>
        <taxon>Bacilli</taxon>
        <taxon>Bacillales</taxon>
        <taxon>Listeriaceae</taxon>
        <taxon>Listeria</taxon>
    </lineage>
</organism>
<protein>
    <recommendedName>
        <fullName evidence="1">Phosphopantetheine adenylyltransferase</fullName>
        <ecNumber evidence="1">2.7.7.3</ecNumber>
    </recommendedName>
    <alternativeName>
        <fullName evidence="1">Dephospho-CoA pyrophosphorylase</fullName>
    </alternativeName>
    <alternativeName>
        <fullName evidence="1">Pantetheine-phosphate adenylyltransferase</fullName>
        <shortName evidence="1">PPAT</shortName>
    </alternativeName>
</protein>
<name>COAD_LISIN</name>
<dbReference type="EC" id="2.7.7.3" evidence="1"/>
<dbReference type="EMBL" id="AL596171">
    <property type="protein sequence ID" value="CAC97388.1"/>
    <property type="molecule type" value="Genomic_DNA"/>
</dbReference>
<dbReference type="PIR" id="AD1702">
    <property type="entry name" value="AD1702"/>
</dbReference>
<dbReference type="RefSeq" id="WP_003767763.1">
    <property type="nucleotide sequence ID" value="NC_003212.1"/>
</dbReference>
<dbReference type="SMR" id="Q929W5"/>
<dbReference type="STRING" id="272626.gene:17566516"/>
<dbReference type="GeneID" id="93235497"/>
<dbReference type="KEGG" id="lin:lin2158"/>
<dbReference type="eggNOG" id="COG0669">
    <property type="taxonomic scope" value="Bacteria"/>
</dbReference>
<dbReference type="HOGENOM" id="CLU_100149_0_1_9"/>
<dbReference type="OrthoDB" id="9806661at2"/>
<dbReference type="UniPathway" id="UPA00241">
    <property type="reaction ID" value="UER00355"/>
</dbReference>
<dbReference type="Proteomes" id="UP000002513">
    <property type="component" value="Chromosome"/>
</dbReference>
<dbReference type="GO" id="GO:0005737">
    <property type="term" value="C:cytoplasm"/>
    <property type="evidence" value="ECO:0007669"/>
    <property type="project" value="UniProtKB-SubCell"/>
</dbReference>
<dbReference type="GO" id="GO:0005524">
    <property type="term" value="F:ATP binding"/>
    <property type="evidence" value="ECO:0007669"/>
    <property type="project" value="UniProtKB-KW"/>
</dbReference>
<dbReference type="GO" id="GO:0004595">
    <property type="term" value="F:pantetheine-phosphate adenylyltransferase activity"/>
    <property type="evidence" value="ECO:0007669"/>
    <property type="project" value="UniProtKB-UniRule"/>
</dbReference>
<dbReference type="GO" id="GO:0015937">
    <property type="term" value="P:coenzyme A biosynthetic process"/>
    <property type="evidence" value="ECO:0007669"/>
    <property type="project" value="UniProtKB-UniRule"/>
</dbReference>
<dbReference type="CDD" id="cd02163">
    <property type="entry name" value="PPAT"/>
    <property type="match status" value="1"/>
</dbReference>
<dbReference type="FunFam" id="3.40.50.620:FF:000012">
    <property type="entry name" value="Phosphopantetheine adenylyltransferase"/>
    <property type="match status" value="1"/>
</dbReference>
<dbReference type="Gene3D" id="3.40.50.620">
    <property type="entry name" value="HUPs"/>
    <property type="match status" value="1"/>
</dbReference>
<dbReference type="HAMAP" id="MF_00151">
    <property type="entry name" value="PPAT_bact"/>
    <property type="match status" value="1"/>
</dbReference>
<dbReference type="InterPro" id="IPR004821">
    <property type="entry name" value="Cyt_trans-like"/>
</dbReference>
<dbReference type="InterPro" id="IPR001980">
    <property type="entry name" value="PPAT"/>
</dbReference>
<dbReference type="InterPro" id="IPR014729">
    <property type="entry name" value="Rossmann-like_a/b/a_fold"/>
</dbReference>
<dbReference type="NCBIfam" id="TIGR01510">
    <property type="entry name" value="coaD_prev_kdtB"/>
    <property type="match status" value="1"/>
</dbReference>
<dbReference type="NCBIfam" id="TIGR00125">
    <property type="entry name" value="cyt_tran_rel"/>
    <property type="match status" value="1"/>
</dbReference>
<dbReference type="PANTHER" id="PTHR21342">
    <property type="entry name" value="PHOSPHOPANTETHEINE ADENYLYLTRANSFERASE"/>
    <property type="match status" value="1"/>
</dbReference>
<dbReference type="PANTHER" id="PTHR21342:SF1">
    <property type="entry name" value="PHOSPHOPANTETHEINE ADENYLYLTRANSFERASE"/>
    <property type="match status" value="1"/>
</dbReference>
<dbReference type="Pfam" id="PF01467">
    <property type="entry name" value="CTP_transf_like"/>
    <property type="match status" value="1"/>
</dbReference>
<dbReference type="PRINTS" id="PR01020">
    <property type="entry name" value="LPSBIOSNTHSS"/>
</dbReference>
<dbReference type="SUPFAM" id="SSF52374">
    <property type="entry name" value="Nucleotidylyl transferase"/>
    <property type="match status" value="1"/>
</dbReference>
<sequence>MGNKIAVIPGTFDPITNGHLDIIERAAKIFDVLYVSVLNNSSKKPLFTVEERMEMIKQVTAHLPNVHVESASGLTVDYAAKRGATAIVRGLRAVSDFEYEMQIASMNRTLNADIETFFVMTNTKYSFLSSSMVKEVAQYQGDIRELVPEVVNKAVKAKFNK</sequence>
<gene>
    <name evidence="1" type="primary">coaD</name>
    <name type="ordered locus">lin2158</name>
</gene>
<feature type="chain" id="PRO_0000156230" description="Phosphopantetheine adenylyltransferase">
    <location>
        <begin position="1"/>
        <end position="161"/>
    </location>
</feature>
<feature type="binding site" evidence="1">
    <location>
        <begin position="11"/>
        <end position="12"/>
    </location>
    <ligand>
        <name>ATP</name>
        <dbReference type="ChEBI" id="CHEBI:30616"/>
    </ligand>
</feature>
<feature type="binding site" evidence="1">
    <location>
        <position position="11"/>
    </location>
    <ligand>
        <name>substrate</name>
    </ligand>
</feature>
<feature type="binding site" evidence="1">
    <location>
        <position position="19"/>
    </location>
    <ligand>
        <name>ATP</name>
        <dbReference type="ChEBI" id="CHEBI:30616"/>
    </ligand>
</feature>
<feature type="binding site" evidence="1">
    <location>
        <position position="43"/>
    </location>
    <ligand>
        <name>substrate</name>
    </ligand>
</feature>
<feature type="binding site" evidence="1">
    <location>
        <position position="75"/>
    </location>
    <ligand>
        <name>substrate</name>
    </ligand>
</feature>
<feature type="binding site" evidence="1">
    <location>
        <position position="89"/>
    </location>
    <ligand>
        <name>substrate</name>
    </ligand>
</feature>
<feature type="binding site" evidence="1">
    <location>
        <begin position="90"/>
        <end position="92"/>
    </location>
    <ligand>
        <name>ATP</name>
        <dbReference type="ChEBI" id="CHEBI:30616"/>
    </ligand>
</feature>
<feature type="binding site" evidence="1">
    <location>
        <position position="100"/>
    </location>
    <ligand>
        <name>ATP</name>
        <dbReference type="ChEBI" id="CHEBI:30616"/>
    </ligand>
</feature>
<feature type="binding site" evidence="1">
    <location>
        <begin position="125"/>
        <end position="131"/>
    </location>
    <ligand>
        <name>ATP</name>
        <dbReference type="ChEBI" id="CHEBI:30616"/>
    </ligand>
</feature>
<feature type="site" description="Transition state stabilizer" evidence="1">
    <location>
        <position position="19"/>
    </location>
</feature>
<proteinExistence type="inferred from homology"/>
<evidence type="ECO:0000255" key="1">
    <source>
        <dbReference type="HAMAP-Rule" id="MF_00151"/>
    </source>
</evidence>
<accession>Q929W5</accession>